<sequence length="188" mass="21154">MTIKSDKWIRRMAQEHGMIEPFVERQVRGADDSRVISYGVSSYGYDVRCAAEFKVFTNIHSAVVDPKNFDEKSFVDINSDVCIIPPNSFALARTVEYFRIPRDVLTICLGKSTYARCGIIVNVTPLEPEWEGHVTLEFSNTTNLPAKIYANEGVAQMLFLQSDEACEVSYKDRGGKYQGQRGVTLPKA</sequence>
<proteinExistence type="inferred from homology"/>
<feature type="chain" id="PRO_0000156003" description="dCTP deaminase">
    <location>
        <begin position="1"/>
        <end position="188"/>
    </location>
</feature>
<feature type="active site" description="Proton donor/acceptor" evidence="1">
    <location>
        <position position="137"/>
    </location>
</feature>
<feature type="binding site" evidence="1">
    <location>
        <begin position="111"/>
        <end position="116"/>
    </location>
    <ligand>
        <name>dCTP</name>
        <dbReference type="ChEBI" id="CHEBI:61481"/>
    </ligand>
</feature>
<feature type="binding site" evidence="1">
    <location>
        <begin position="135"/>
        <end position="137"/>
    </location>
    <ligand>
        <name>dCTP</name>
        <dbReference type="ChEBI" id="CHEBI:61481"/>
    </ligand>
</feature>
<feature type="binding site" evidence="1">
    <location>
        <position position="156"/>
    </location>
    <ligand>
        <name>dCTP</name>
        <dbReference type="ChEBI" id="CHEBI:61481"/>
    </ligand>
</feature>
<feature type="binding site" evidence="1">
    <location>
        <position position="170"/>
    </location>
    <ligand>
        <name>dCTP</name>
        <dbReference type="ChEBI" id="CHEBI:61481"/>
    </ligand>
</feature>
<feature type="binding site" evidence="1">
    <location>
        <position position="180"/>
    </location>
    <ligand>
        <name>dCTP</name>
        <dbReference type="ChEBI" id="CHEBI:61481"/>
    </ligand>
</feature>
<name>DCD_PSEAE</name>
<organism>
    <name type="scientific">Pseudomonas aeruginosa (strain ATCC 15692 / DSM 22644 / CIP 104116 / JCM 14847 / LMG 12228 / 1C / PRS 101 / PAO1)</name>
    <dbReference type="NCBI Taxonomy" id="208964"/>
    <lineage>
        <taxon>Bacteria</taxon>
        <taxon>Pseudomonadati</taxon>
        <taxon>Pseudomonadota</taxon>
        <taxon>Gammaproteobacteria</taxon>
        <taxon>Pseudomonadales</taxon>
        <taxon>Pseudomonadaceae</taxon>
        <taxon>Pseudomonas</taxon>
    </lineage>
</organism>
<keyword id="KW-0378">Hydrolase</keyword>
<keyword id="KW-0546">Nucleotide metabolism</keyword>
<keyword id="KW-0547">Nucleotide-binding</keyword>
<keyword id="KW-1185">Reference proteome</keyword>
<evidence type="ECO:0000255" key="1">
    <source>
        <dbReference type="HAMAP-Rule" id="MF_00146"/>
    </source>
</evidence>
<gene>
    <name evidence="1" type="primary">dcd</name>
    <name type="ordered locus">PA3480</name>
</gene>
<dbReference type="EC" id="3.5.4.13" evidence="1"/>
<dbReference type="EMBL" id="AE004091">
    <property type="protein sequence ID" value="AAG06868.1"/>
    <property type="molecule type" value="Genomic_DNA"/>
</dbReference>
<dbReference type="PIR" id="A83210">
    <property type="entry name" value="A83210"/>
</dbReference>
<dbReference type="RefSeq" id="NP_252170.1">
    <property type="nucleotide sequence ID" value="NC_002516.2"/>
</dbReference>
<dbReference type="RefSeq" id="WP_003092017.1">
    <property type="nucleotide sequence ID" value="NZ_QZGE01000039.1"/>
</dbReference>
<dbReference type="SMR" id="Q9HYC9"/>
<dbReference type="FunCoup" id="Q9HYC9">
    <property type="interactions" value="275"/>
</dbReference>
<dbReference type="STRING" id="208964.PA3480"/>
<dbReference type="PaxDb" id="208964-PA3480"/>
<dbReference type="DNASU" id="878281"/>
<dbReference type="GeneID" id="77220012"/>
<dbReference type="GeneID" id="878281"/>
<dbReference type="KEGG" id="pae:PA3480"/>
<dbReference type="PATRIC" id="fig|208964.12.peg.3643"/>
<dbReference type="PseudoCAP" id="PA3480"/>
<dbReference type="HOGENOM" id="CLU_087476_4_0_6"/>
<dbReference type="InParanoid" id="Q9HYC9"/>
<dbReference type="OrthoDB" id="9780956at2"/>
<dbReference type="PhylomeDB" id="Q9HYC9"/>
<dbReference type="BioCyc" id="PAER208964:G1FZ6-3548-MONOMER"/>
<dbReference type="UniPathway" id="UPA00610">
    <property type="reaction ID" value="UER00665"/>
</dbReference>
<dbReference type="Proteomes" id="UP000002438">
    <property type="component" value="Chromosome"/>
</dbReference>
<dbReference type="GO" id="GO:0008829">
    <property type="term" value="F:dCTP deaminase activity"/>
    <property type="evidence" value="ECO:0000318"/>
    <property type="project" value="GO_Central"/>
</dbReference>
<dbReference type="GO" id="GO:0000166">
    <property type="term" value="F:nucleotide binding"/>
    <property type="evidence" value="ECO:0007669"/>
    <property type="project" value="UniProtKB-KW"/>
</dbReference>
<dbReference type="GO" id="GO:0006226">
    <property type="term" value="P:dUMP biosynthetic process"/>
    <property type="evidence" value="ECO:0007669"/>
    <property type="project" value="UniProtKB-UniPathway"/>
</dbReference>
<dbReference type="GO" id="GO:0006229">
    <property type="term" value="P:dUTP biosynthetic process"/>
    <property type="evidence" value="ECO:0007669"/>
    <property type="project" value="UniProtKB-UniRule"/>
</dbReference>
<dbReference type="GO" id="GO:0015949">
    <property type="term" value="P:nucleobase-containing small molecule interconversion"/>
    <property type="evidence" value="ECO:0000318"/>
    <property type="project" value="GO_Central"/>
</dbReference>
<dbReference type="CDD" id="cd07557">
    <property type="entry name" value="trimeric_dUTPase"/>
    <property type="match status" value="1"/>
</dbReference>
<dbReference type="FunFam" id="2.70.40.10:FF:000001">
    <property type="entry name" value="dCTP deaminase"/>
    <property type="match status" value="1"/>
</dbReference>
<dbReference type="Gene3D" id="2.70.40.10">
    <property type="match status" value="1"/>
</dbReference>
<dbReference type="HAMAP" id="MF_00146">
    <property type="entry name" value="dCTP_deaminase"/>
    <property type="match status" value="1"/>
</dbReference>
<dbReference type="InterPro" id="IPR011962">
    <property type="entry name" value="dCTP_deaminase"/>
</dbReference>
<dbReference type="InterPro" id="IPR036157">
    <property type="entry name" value="dUTPase-like_sf"/>
</dbReference>
<dbReference type="InterPro" id="IPR033704">
    <property type="entry name" value="dUTPase_trimeric"/>
</dbReference>
<dbReference type="NCBIfam" id="TIGR02274">
    <property type="entry name" value="dCTP_deam"/>
    <property type="match status" value="1"/>
</dbReference>
<dbReference type="PANTHER" id="PTHR42680">
    <property type="entry name" value="DCTP DEAMINASE"/>
    <property type="match status" value="1"/>
</dbReference>
<dbReference type="PANTHER" id="PTHR42680:SF3">
    <property type="entry name" value="DCTP DEAMINASE"/>
    <property type="match status" value="1"/>
</dbReference>
<dbReference type="Pfam" id="PF22769">
    <property type="entry name" value="DCD"/>
    <property type="match status" value="1"/>
</dbReference>
<dbReference type="SUPFAM" id="SSF51283">
    <property type="entry name" value="dUTPase-like"/>
    <property type="match status" value="1"/>
</dbReference>
<reference key="1">
    <citation type="journal article" date="2000" name="Nature">
        <title>Complete genome sequence of Pseudomonas aeruginosa PAO1, an opportunistic pathogen.</title>
        <authorList>
            <person name="Stover C.K."/>
            <person name="Pham X.-Q.T."/>
            <person name="Erwin A.L."/>
            <person name="Mizoguchi S.D."/>
            <person name="Warrener P."/>
            <person name="Hickey M.J."/>
            <person name="Brinkman F.S.L."/>
            <person name="Hufnagle W.O."/>
            <person name="Kowalik D.J."/>
            <person name="Lagrou M."/>
            <person name="Garber R.L."/>
            <person name="Goltry L."/>
            <person name="Tolentino E."/>
            <person name="Westbrock-Wadman S."/>
            <person name="Yuan Y."/>
            <person name="Brody L.L."/>
            <person name="Coulter S.N."/>
            <person name="Folger K.R."/>
            <person name="Kas A."/>
            <person name="Larbig K."/>
            <person name="Lim R.M."/>
            <person name="Smith K.A."/>
            <person name="Spencer D.H."/>
            <person name="Wong G.K.-S."/>
            <person name="Wu Z."/>
            <person name="Paulsen I.T."/>
            <person name="Reizer J."/>
            <person name="Saier M.H. Jr."/>
            <person name="Hancock R.E.W."/>
            <person name="Lory S."/>
            <person name="Olson M.V."/>
        </authorList>
    </citation>
    <scope>NUCLEOTIDE SEQUENCE [LARGE SCALE GENOMIC DNA]</scope>
    <source>
        <strain>ATCC 15692 / DSM 22644 / CIP 104116 / JCM 14847 / LMG 12228 / 1C / PRS 101 / PAO1</strain>
    </source>
</reference>
<accession>Q9HYC9</accession>
<comment type="function">
    <text evidence="1">Catalyzes the deamination of dCTP to dUTP.</text>
</comment>
<comment type="catalytic activity">
    <reaction evidence="1">
        <text>dCTP + H2O + H(+) = dUTP + NH4(+)</text>
        <dbReference type="Rhea" id="RHEA:22680"/>
        <dbReference type="ChEBI" id="CHEBI:15377"/>
        <dbReference type="ChEBI" id="CHEBI:15378"/>
        <dbReference type="ChEBI" id="CHEBI:28938"/>
        <dbReference type="ChEBI" id="CHEBI:61481"/>
        <dbReference type="ChEBI" id="CHEBI:61555"/>
        <dbReference type="EC" id="3.5.4.13"/>
    </reaction>
</comment>
<comment type="pathway">
    <text evidence="1">Pyrimidine metabolism; dUMP biosynthesis; dUMP from dCTP (dUTP route): step 1/2.</text>
</comment>
<comment type="subunit">
    <text evidence="1">Homotrimer.</text>
</comment>
<comment type="similarity">
    <text evidence="1">Belongs to the dCTP deaminase family.</text>
</comment>
<protein>
    <recommendedName>
        <fullName evidence="1">dCTP deaminase</fullName>
        <ecNumber evidence="1">3.5.4.13</ecNumber>
    </recommendedName>
    <alternativeName>
        <fullName evidence="1">Deoxycytidine triphosphate deaminase</fullName>
    </alternativeName>
</protein>